<keyword id="KW-0067">ATP-binding</keyword>
<keyword id="KW-0963">Cytoplasm</keyword>
<keyword id="KW-0235">DNA replication</keyword>
<keyword id="KW-0238">DNA-binding</keyword>
<keyword id="KW-0446">Lipid-binding</keyword>
<keyword id="KW-0547">Nucleotide-binding</keyword>
<keyword id="KW-1185">Reference proteome</keyword>
<accession>A5E812</accession>
<protein>
    <recommendedName>
        <fullName evidence="1">Chromosomal replication initiator protein DnaA</fullName>
    </recommendedName>
</protein>
<feature type="chain" id="PRO_1000048610" description="Chromosomal replication initiator protein DnaA">
    <location>
        <begin position="1"/>
        <end position="475"/>
    </location>
</feature>
<feature type="region of interest" description="Domain I, interacts with DnaA modulators" evidence="1">
    <location>
        <begin position="1"/>
        <end position="73"/>
    </location>
</feature>
<feature type="region of interest" description="Domain II" evidence="1">
    <location>
        <begin position="73"/>
        <end position="131"/>
    </location>
</feature>
<feature type="region of interest" description="Domain III, AAA+ region" evidence="1">
    <location>
        <begin position="132"/>
        <end position="354"/>
    </location>
</feature>
<feature type="region of interest" description="Domain IV, binds dsDNA" evidence="1">
    <location>
        <begin position="355"/>
        <end position="475"/>
    </location>
</feature>
<feature type="binding site" evidence="1">
    <location>
        <position position="179"/>
    </location>
    <ligand>
        <name>ATP</name>
        <dbReference type="ChEBI" id="CHEBI:30616"/>
    </ligand>
</feature>
<feature type="binding site" evidence="1">
    <location>
        <position position="181"/>
    </location>
    <ligand>
        <name>ATP</name>
        <dbReference type="ChEBI" id="CHEBI:30616"/>
    </ligand>
</feature>
<feature type="binding site" evidence="1">
    <location>
        <position position="182"/>
    </location>
    <ligand>
        <name>ATP</name>
        <dbReference type="ChEBI" id="CHEBI:30616"/>
    </ligand>
</feature>
<feature type="binding site" evidence="1">
    <location>
        <position position="183"/>
    </location>
    <ligand>
        <name>ATP</name>
        <dbReference type="ChEBI" id="CHEBI:30616"/>
    </ligand>
</feature>
<comment type="function">
    <text evidence="1">Plays an essential role in the initiation and regulation of chromosomal replication. ATP-DnaA binds to the origin of replication (oriC) to initiate formation of the DNA replication initiation complex once per cell cycle. Binds the DnaA box (a 9 base pair repeat at the origin) and separates the double-stranded (ds)DNA. Forms a right-handed helical filament on oriC DNA; dsDNA binds to the exterior of the filament while single-stranded (ss)DNA is stabiized in the filament's interior. The ATP-DnaA-oriC complex binds and stabilizes one strand of the AT-rich DNA unwinding element (DUE), permitting loading of DNA polymerase. After initiation quickly degrades to an ADP-DnaA complex that is not apt for DNA replication. Binds acidic phospholipids.</text>
</comment>
<comment type="subunit">
    <text evidence="1">Oligomerizes as a right-handed, spiral filament on DNA at oriC.</text>
</comment>
<comment type="subcellular location">
    <subcellularLocation>
        <location evidence="1">Cytoplasm</location>
    </subcellularLocation>
</comment>
<comment type="domain">
    <text evidence="1">Domain I is involved in oligomerization and binding regulators, domain II is flexibile and of varying length in different bacteria, domain III forms the AAA+ region, while domain IV binds dsDNA.</text>
</comment>
<comment type="similarity">
    <text evidence="1">Belongs to the DnaA family.</text>
</comment>
<sequence>MTNSEQERWSRVKGRLRSTVGEDVYTSWFARMDLEAVQDESVHLSVPTRFLKSWIQAHYAERVLSCWQAEMPEVHRIDLSVRTAMRCATPAKEAPVAVEARRAERGDAKPADTRAPVMTPVAASHDALGGSPLDPRLTFASFVVGRANTLAHAAARQVADGRRGDPVMFNPLYIHAGVGLGKTHLLQAVTWAGNAGGERKVLYLTAEKFMYGFVAALKSQTALAFKEALRGIDVLVIDDLQFLQGKSTQAEFCHTLNALIDAGRQVVIAADRPPSDLESLDDRVRSRLAGGLVVEMATLGEDLRLGILKSRVAAARAHHASFDVPEPVLDYLARSITHNGRDLEGAINRLLAHSKLNNQPVTLDMAEREVRDLVRPQEPKRIKIEDIQRVVARQYNVSRSDLLSSRRTANVVRPRQVAMYLAKTLTLRSLPEIGRRFGGRDHTTVLHAVRKIEALVGKDTTLNDEVEALKRQLQD</sequence>
<gene>
    <name evidence="1" type="primary">dnaA</name>
    <name type="ordered locus">BBta_0001</name>
</gene>
<proteinExistence type="inferred from homology"/>
<evidence type="ECO:0000255" key="1">
    <source>
        <dbReference type="HAMAP-Rule" id="MF_00377"/>
    </source>
</evidence>
<reference key="1">
    <citation type="journal article" date="2007" name="Science">
        <title>Legumes symbioses: absence of nod genes in photosynthetic bradyrhizobia.</title>
        <authorList>
            <person name="Giraud E."/>
            <person name="Moulin L."/>
            <person name="Vallenet D."/>
            <person name="Barbe V."/>
            <person name="Cytryn E."/>
            <person name="Avarre J.-C."/>
            <person name="Jaubert M."/>
            <person name="Simon D."/>
            <person name="Cartieaux F."/>
            <person name="Prin Y."/>
            <person name="Bena G."/>
            <person name="Hannibal L."/>
            <person name="Fardoux J."/>
            <person name="Kojadinovic M."/>
            <person name="Vuillet L."/>
            <person name="Lajus A."/>
            <person name="Cruveiller S."/>
            <person name="Rouy Z."/>
            <person name="Mangenot S."/>
            <person name="Segurens B."/>
            <person name="Dossat C."/>
            <person name="Franck W.L."/>
            <person name="Chang W.-S."/>
            <person name="Saunders E."/>
            <person name="Bruce D."/>
            <person name="Richardson P."/>
            <person name="Normand P."/>
            <person name="Dreyfus B."/>
            <person name="Pignol D."/>
            <person name="Stacey G."/>
            <person name="Emerich D."/>
            <person name="Vermeglio A."/>
            <person name="Medigue C."/>
            <person name="Sadowsky M."/>
        </authorList>
    </citation>
    <scope>NUCLEOTIDE SEQUENCE [LARGE SCALE GENOMIC DNA]</scope>
    <source>
        <strain>BTAi1 / ATCC BAA-1182</strain>
    </source>
</reference>
<dbReference type="EMBL" id="CP000494">
    <property type="protein sequence ID" value="ABQ32306.1"/>
    <property type="molecule type" value="Genomic_DNA"/>
</dbReference>
<dbReference type="RefSeq" id="WP_011942530.1">
    <property type="nucleotide sequence ID" value="NC_009485.1"/>
</dbReference>
<dbReference type="SMR" id="A5E812"/>
<dbReference type="STRING" id="288000.BBta_0001"/>
<dbReference type="KEGG" id="bbt:BBta_0001"/>
<dbReference type="eggNOG" id="COG0593">
    <property type="taxonomic scope" value="Bacteria"/>
</dbReference>
<dbReference type="HOGENOM" id="CLU_026910_3_0_5"/>
<dbReference type="OrthoDB" id="9807019at2"/>
<dbReference type="Proteomes" id="UP000000246">
    <property type="component" value="Chromosome"/>
</dbReference>
<dbReference type="GO" id="GO:0005737">
    <property type="term" value="C:cytoplasm"/>
    <property type="evidence" value="ECO:0007669"/>
    <property type="project" value="UniProtKB-SubCell"/>
</dbReference>
<dbReference type="GO" id="GO:0005886">
    <property type="term" value="C:plasma membrane"/>
    <property type="evidence" value="ECO:0007669"/>
    <property type="project" value="TreeGrafter"/>
</dbReference>
<dbReference type="GO" id="GO:0005524">
    <property type="term" value="F:ATP binding"/>
    <property type="evidence" value="ECO:0007669"/>
    <property type="project" value="UniProtKB-UniRule"/>
</dbReference>
<dbReference type="GO" id="GO:0016887">
    <property type="term" value="F:ATP hydrolysis activity"/>
    <property type="evidence" value="ECO:0007669"/>
    <property type="project" value="InterPro"/>
</dbReference>
<dbReference type="GO" id="GO:0003688">
    <property type="term" value="F:DNA replication origin binding"/>
    <property type="evidence" value="ECO:0007669"/>
    <property type="project" value="UniProtKB-UniRule"/>
</dbReference>
<dbReference type="GO" id="GO:0008289">
    <property type="term" value="F:lipid binding"/>
    <property type="evidence" value="ECO:0007669"/>
    <property type="project" value="UniProtKB-KW"/>
</dbReference>
<dbReference type="GO" id="GO:0006270">
    <property type="term" value="P:DNA replication initiation"/>
    <property type="evidence" value="ECO:0007669"/>
    <property type="project" value="UniProtKB-UniRule"/>
</dbReference>
<dbReference type="GO" id="GO:0006275">
    <property type="term" value="P:regulation of DNA replication"/>
    <property type="evidence" value="ECO:0007669"/>
    <property type="project" value="UniProtKB-UniRule"/>
</dbReference>
<dbReference type="CDD" id="cd00009">
    <property type="entry name" value="AAA"/>
    <property type="match status" value="1"/>
</dbReference>
<dbReference type="CDD" id="cd06571">
    <property type="entry name" value="Bac_DnaA_C"/>
    <property type="match status" value="1"/>
</dbReference>
<dbReference type="FunFam" id="1.10.1750.10:FF:000002">
    <property type="entry name" value="Chromosomal replication initiator protein DnaA"/>
    <property type="match status" value="1"/>
</dbReference>
<dbReference type="FunFam" id="3.40.50.300:FF:000668">
    <property type="entry name" value="Chromosomal replication initiator protein DnaA"/>
    <property type="match status" value="1"/>
</dbReference>
<dbReference type="Gene3D" id="1.10.1750.10">
    <property type="match status" value="1"/>
</dbReference>
<dbReference type="Gene3D" id="1.10.8.60">
    <property type="match status" value="1"/>
</dbReference>
<dbReference type="Gene3D" id="3.30.300.180">
    <property type="match status" value="1"/>
</dbReference>
<dbReference type="Gene3D" id="3.40.50.300">
    <property type="entry name" value="P-loop containing nucleotide triphosphate hydrolases"/>
    <property type="match status" value="1"/>
</dbReference>
<dbReference type="HAMAP" id="MF_00377">
    <property type="entry name" value="DnaA_bact"/>
    <property type="match status" value="1"/>
</dbReference>
<dbReference type="InterPro" id="IPR003593">
    <property type="entry name" value="AAA+_ATPase"/>
</dbReference>
<dbReference type="InterPro" id="IPR001957">
    <property type="entry name" value="Chromosome_initiator_DnaA"/>
</dbReference>
<dbReference type="InterPro" id="IPR020591">
    <property type="entry name" value="Chromosome_initiator_DnaA-like"/>
</dbReference>
<dbReference type="InterPro" id="IPR018312">
    <property type="entry name" value="Chromosome_initiator_DnaA_CS"/>
</dbReference>
<dbReference type="InterPro" id="IPR013159">
    <property type="entry name" value="DnaA_C"/>
</dbReference>
<dbReference type="InterPro" id="IPR013317">
    <property type="entry name" value="DnaA_dom"/>
</dbReference>
<dbReference type="InterPro" id="IPR024633">
    <property type="entry name" value="DnaA_N_dom"/>
</dbReference>
<dbReference type="InterPro" id="IPR038454">
    <property type="entry name" value="DnaA_N_sf"/>
</dbReference>
<dbReference type="InterPro" id="IPR027417">
    <property type="entry name" value="P-loop_NTPase"/>
</dbReference>
<dbReference type="InterPro" id="IPR010921">
    <property type="entry name" value="Trp_repressor/repl_initiator"/>
</dbReference>
<dbReference type="NCBIfam" id="TIGR00362">
    <property type="entry name" value="DnaA"/>
    <property type="match status" value="1"/>
</dbReference>
<dbReference type="PANTHER" id="PTHR30050">
    <property type="entry name" value="CHROMOSOMAL REPLICATION INITIATOR PROTEIN DNAA"/>
    <property type="match status" value="1"/>
</dbReference>
<dbReference type="PANTHER" id="PTHR30050:SF2">
    <property type="entry name" value="CHROMOSOMAL REPLICATION INITIATOR PROTEIN DNAA"/>
    <property type="match status" value="1"/>
</dbReference>
<dbReference type="Pfam" id="PF00308">
    <property type="entry name" value="Bac_DnaA"/>
    <property type="match status" value="1"/>
</dbReference>
<dbReference type="Pfam" id="PF08299">
    <property type="entry name" value="Bac_DnaA_C"/>
    <property type="match status" value="1"/>
</dbReference>
<dbReference type="Pfam" id="PF11638">
    <property type="entry name" value="DnaA_N"/>
    <property type="match status" value="1"/>
</dbReference>
<dbReference type="PRINTS" id="PR00051">
    <property type="entry name" value="DNAA"/>
</dbReference>
<dbReference type="SMART" id="SM00382">
    <property type="entry name" value="AAA"/>
    <property type="match status" value="1"/>
</dbReference>
<dbReference type="SMART" id="SM00760">
    <property type="entry name" value="Bac_DnaA_C"/>
    <property type="match status" value="1"/>
</dbReference>
<dbReference type="SUPFAM" id="SSF52540">
    <property type="entry name" value="P-loop containing nucleoside triphosphate hydrolases"/>
    <property type="match status" value="1"/>
</dbReference>
<dbReference type="SUPFAM" id="SSF48295">
    <property type="entry name" value="TrpR-like"/>
    <property type="match status" value="1"/>
</dbReference>
<dbReference type="PROSITE" id="PS01008">
    <property type="entry name" value="DNAA"/>
    <property type="match status" value="1"/>
</dbReference>
<organism>
    <name type="scientific">Bradyrhizobium sp. (strain BTAi1 / ATCC BAA-1182)</name>
    <dbReference type="NCBI Taxonomy" id="288000"/>
    <lineage>
        <taxon>Bacteria</taxon>
        <taxon>Pseudomonadati</taxon>
        <taxon>Pseudomonadota</taxon>
        <taxon>Alphaproteobacteria</taxon>
        <taxon>Hyphomicrobiales</taxon>
        <taxon>Nitrobacteraceae</taxon>
        <taxon>Bradyrhizobium</taxon>
    </lineage>
</organism>
<name>DNAA_BRASB</name>